<organism>
    <name type="scientific">Staphylococcus aureus (strain USA300)</name>
    <dbReference type="NCBI Taxonomy" id="367830"/>
    <lineage>
        <taxon>Bacteria</taxon>
        <taxon>Bacillati</taxon>
        <taxon>Bacillota</taxon>
        <taxon>Bacilli</taxon>
        <taxon>Bacillales</taxon>
        <taxon>Staphylococcaceae</taxon>
        <taxon>Staphylococcus</taxon>
    </lineage>
</organism>
<evidence type="ECO:0000250" key="1"/>
<evidence type="ECO:0000255" key="2"/>
<evidence type="ECO:0000305" key="3"/>
<accession>Q2FIC9</accession>
<protein>
    <recommendedName>
        <fullName>Na(+)/H(+) antiporter subunit G1</fullName>
    </recommendedName>
    <alternativeName>
        <fullName>Mnh complex subunit G1</fullName>
    </alternativeName>
</protein>
<comment type="function">
    <text evidence="1">Mnh complex is a Na(+)/H(+) antiporter involved in Na(+) excretion.</text>
</comment>
<comment type="subunit">
    <text evidence="1">May form a heterooligomeric complex that consists of seven subunits: mnhA1, mnhB1, mnhC1, mnhD1, mnhE1, mnhF1 and mnhG1.</text>
</comment>
<comment type="subcellular location">
    <subcellularLocation>
        <location evidence="3">Cell membrane</location>
        <topology evidence="3">Multi-pass membrane protein</topology>
    </subcellularLocation>
</comment>
<comment type="similarity">
    <text evidence="3">Belongs to the CPA3 antiporters (TC 2.A.63) subunit G family.</text>
</comment>
<keyword id="KW-0050">Antiport</keyword>
<keyword id="KW-1003">Cell membrane</keyword>
<keyword id="KW-0375">Hydrogen ion transport</keyword>
<keyword id="KW-0406">Ion transport</keyword>
<keyword id="KW-0472">Membrane</keyword>
<keyword id="KW-0915">Sodium</keyword>
<keyword id="KW-0739">Sodium transport</keyword>
<keyword id="KW-0812">Transmembrane</keyword>
<keyword id="KW-1133">Transmembrane helix</keyword>
<keyword id="KW-0813">Transport</keyword>
<name>MNHG1_STAA3</name>
<sequence length="118" mass="12819">MIKIILISLALIFVIIGALISALAAIGLLRLEDVYSRAHAAGKASTLGAMSLLFGTFLYFIATQGFVNMQLIVAIIFVLITGPLSSHMIMKAAYNIKTPYTKKTKVDEISEDLKDTKL</sequence>
<reference key="1">
    <citation type="journal article" date="2006" name="Lancet">
        <title>Complete genome sequence of USA300, an epidemic clone of community-acquired meticillin-resistant Staphylococcus aureus.</title>
        <authorList>
            <person name="Diep B.A."/>
            <person name="Gill S.R."/>
            <person name="Chang R.F."/>
            <person name="Phan T.H."/>
            <person name="Chen J.H."/>
            <person name="Davidson M.G."/>
            <person name="Lin F."/>
            <person name="Lin J."/>
            <person name="Carleton H.A."/>
            <person name="Mongodin E.F."/>
            <person name="Sensabaugh G.F."/>
            <person name="Perdreau-Remington F."/>
        </authorList>
    </citation>
    <scope>NUCLEOTIDE SEQUENCE [LARGE SCALE GENOMIC DNA]</scope>
    <source>
        <strain>USA300</strain>
    </source>
</reference>
<feature type="chain" id="PRO_0000372168" description="Na(+)/H(+) antiporter subunit G1">
    <location>
        <begin position="1"/>
        <end position="118"/>
    </location>
</feature>
<feature type="transmembrane region" description="Helical" evidence="2">
    <location>
        <begin position="4"/>
        <end position="24"/>
    </location>
</feature>
<feature type="transmembrane region" description="Helical" evidence="2">
    <location>
        <begin position="38"/>
        <end position="58"/>
    </location>
</feature>
<feature type="transmembrane region" description="Helical" evidence="2">
    <location>
        <begin position="60"/>
        <end position="80"/>
    </location>
</feature>
<proteinExistence type="inferred from homology"/>
<dbReference type="EMBL" id="CP000255">
    <property type="protein sequence ID" value="ABD22142.1"/>
    <property type="molecule type" value="Genomic_DNA"/>
</dbReference>
<dbReference type="RefSeq" id="WP_000590451.1">
    <property type="nucleotide sequence ID" value="NZ_CP027476.1"/>
</dbReference>
<dbReference type="SMR" id="Q2FIC9"/>
<dbReference type="GeneID" id="98345267"/>
<dbReference type="KEGG" id="saa:SAUSA300_0849"/>
<dbReference type="HOGENOM" id="CLU_121334_0_3_9"/>
<dbReference type="OMA" id="TNPISAH"/>
<dbReference type="Proteomes" id="UP000001939">
    <property type="component" value="Chromosome"/>
</dbReference>
<dbReference type="GO" id="GO:0005886">
    <property type="term" value="C:plasma membrane"/>
    <property type="evidence" value="ECO:0007669"/>
    <property type="project" value="UniProtKB-SubCell"/>
</dbReference>
<dbReference type="GO" id="GO:0015385">
    <property type="term" value="F:sodium:proton antiporter activity"/>
    <property type="evidence" value="ECO:0007669"/>
    <property type="project" value="TreeGrafter"/>
</dbReference>
<dbReference type="InterPro" id="IPR005133">
    <property type="entry name" value="PhaG_MnhG_YufB"/>
</dbReference>
<dbReference type="NCBIfam" id="TIGR01300">
    <property type="entry name" value="CPA3_mnhG_phaG"/>
    <property type="match status" value="1"/>
</dbReference>
<dbReference type="NCBIfam" id="NF009237">
    <property type="entry name" value="PRK12587.1"/>
    <property type="match status" value="1"/>
</dbReference>
<dbReference type="NCBIfam" id="NF009314">
    <property type="entry name" value="PRK12674.1-2"/>
    <property type="match status" value="1"/>
</dbReference>
<dbReference type="PANTHER" id="PTHR34703">
    <property type="entry name" value="ANTIPORTER SUBUNIT MNHG2-RELATED"/>
    <property type="match status" value="1"/>
</dbReference>
<dbReference type="PANTHER" id="PTHR34703:SF1">
    <property type="entry name" value="ANTIPORTER SUBUNIT MNHG2-RELATED"/>
    <property type="match status" value="1"/>
</dbReference>
<dbReference type="Pfam" id="PF03334">
    <property type="entry name" value="PhaG_MnhG_YufB"/>
    <property type="match status" value="1"/>
</dbReference>
<gene>
    <name type="primary">mnhG1</name>
    <name type="ordered locus">SAUSA300_0849</name>
</gene>